<sequence>MDIAIQHPWFKRALGPFYPSRLFDQFFGEGLFEYDLLPFLSSTISPYYRQSLFRTVLDSGVSEVRSDRDKFVIFLDVKHFSPEDLTVKVQEDFVEIHGKHNERQDDHGYISREFHRRYRLPSNVDQSALSCSLSADGMLTFSGPKVPSGVDAGHSERAIPVSREEKPSSAPTS</sequence>
<comment type="function">
    <text evidence="4">Contributes to the transparency and refractive index of the lens. Acts as a chaperone, preventing aggregation of various proteins under a wide range of stress conditions. Required for the correct formation of lens intermediate filaments as part of a complex composed of BFSP1, BFSP2 and CRYAA.</text>
</comment>
<comment type="subunit">
    <text evidence="2 4">Heteromer composed of three CRYAA and one CRYAB subunits. Inter-subunit bridging via zinc ions enhances stability, which is crucial as there is no protein turn over in the lens. Can also form homodimers and homotetramers (dimers of dimers) which serve as the building blocks of homooligomers (By similarity). Within homooligomers, the zinc-binding motif is created from residues of 3 different molecules. His-100 and Glu-102 from one molecule are ligands of the zinc ion, and His-107 and His-154 residues from additional molecules complete the site with tetrahedral coordination geometry (By similarity). Part of a complex required for lens intermediate filament formation composed of BFSP1, BFSP2 and CRYAA (By similarity).</text>
</comment>
<comment type="subcellular location">
    <subcellularLocation>
        <location evidence="4">Cytoplasm</location>
    </subcellularLocation>
    <subcellularLocation>
        <location evidence="4">Nucleus</location>
    </subcellularLocation>
    <text evidence="4">Translocates to the nucleus during heat shock and resides in sub-nuclear structures known as SC35 speckles or nuclear splicing speckles.</text>
</comment>
<comment type="PTM">
    <text evidence="4">Acetylation at Lys-70 may increase chaperone activity.</text>
</comment>
<comment type="PTM">
    <text evidence="4">Undergoes age-dependent proteolytical cleavage at the C-terminus.</text>
</comment>
<comment type="similarity">
    <text evidence="5">Belongs to the small heat shock protein (HSP20) family.</text>
</comment>
<reference key="1">
    <citation type="journal article" date="1975" name="Eur. J. Biochem.">
        <title>Primary structures of the alpha-crystallin A chains of seven mammalian species.</title>
        <authorList>
            <person name="de Jong W.W."/>
            <person name="van der Ouderaa F.J."/>
            <person name="Versteeg M."/>
            <person name="Groenewoud G."/>
            <person name="van Amelsvoort J.M."/>
            <person name="Bloemendal H."/>
        </authorList>
    </citation>
    <scope>PARTIAL PROTEIN SEQUENCE</scope>
</reference>
<evidence type="ECO:0000250" key="1"/>
<evidence type="ECO:0000250" key="2">
    <source>
        <dbReference type="UniProtKB" id="P02470"/>
    </source>
</evidence>
<evidence type="ECO:0000250" key="3">
    <source>
        <dbReference type="UniProtKB" id="P02474"/>
    </source>
</evidence>
<evidence type="ECO:0000250" key="4">
    <source>
        <dbReference type="UniProtKB" id="P02489"/>
    </source>
</evidence>
<evidence type="ECO:0000255" key="5">
    <source>
        <dbReference type="PROSITE-ProRule" id="PRU00285"/>
    </source>
</evidence>
<evidence type="ECO:0000256" key="6">
    <source>
        <dbReference type="SAM" id="MobiDB-lite"/>
    </source>
</evidence>
<evidence type="ECO:0000305" key="7"/>
<organism>
    <name type="scientific">Sus scrofa</name>
    <name type="common">Pig</name>
    <dbReference type="NCBI Taxonomy" id="9823"/>
    <lineage>
        <taxon>Eukaryota</taxon>
        <taxon>Metazoa</taxon>
        <taxon>Chordata</taxon>
        <taxon>Craniata</taxon>
        <taxon>Vertebrata</taxon>
        <taxon>Euteleostomi</taxon>
        <taxon>Mammalia</taxon>
        <taxon>Eutheria</taxon>
        <taxon>Laurasiatheria</taxon>
        <taxon>Artiodactyla</taxon>
        <taxon>Suina</taxon>
        <taxon>Suidae</taxon>
        <taxon>Sus</taxon>
    </lineage>
</organism>
<dbReference type="PIR" id="A02877">
    <property type="entry name" value="CYPGAA"/>
</dbReference>
<dbReference type="RefSeq" id="XP_020924949.1">
    <property type="nucleotide sequence ID" value="XM_021069290.1"/>
</dbReference>
<dbReference type="BMRB" id="P02475"/>
<dbReference type="SMR" id="P02475"/>
<dbReference type="FunCoup" id="P02475">
    <property type="interactions" value="644"/>
</dbReference>
<dbReference type="STRING" id="9823.ENSSSCP00000042950"/>
<dbReference type="GlyCosmos" id="P02475">
    <property type="glycosylation" value="1 site, No reported glycans"/>
</dbReference>
<dbReference type="GlyGen" id="P02475">
    <property type="glycosylation" value="1 site"/>
</dbReference>
<dbReference type="PeptideAtlas" id="P02475"/>
<dbReference type="Ensembl" id="ENSSSCT00000062809.3">
    <property type="protein sequence ID" value="ENSSSCP00000042950.1"/>
    <property type="gene ID" value="ENSSSCG00000038816.3"/>
</dbReference>
<dbReference type="Ensembl" id="ENSSSCT00015060581.1">
    <property type="protein sequence ID" value="ENSSSCP00015024339.1"/>
    <property type="gene ID" value="ENSSSCG00015045347.1"/>
</dbReference>
<dbReference type="Ensembl" id="ENSSSCT00025090490.1">
    <property type="protein sequence ID" value="ENSSSCP00025039647.1"/>
    <property type="gene ID" value="ENSSSCG00025065910.1"/>
</dbReference>
<dbReference type="Ensembl" id="ENSSSCT00030000622.1">
    <property type="protein sequence ID" value="ENSSSCP00030000329.1"/>
    <property type="gene ID" value="ENSSSCG00030000438.1"/>
</dbReference>
<dbReference type="Ensembl" id="ENSSSCT00035026919.1">
    <property type="protein sequence ID" value="ENSSSCP00035010281.1"/>
    <property type="gene ID" value="ENSSSCG00035020690.1"/>
</dbReference>
<dbReference type="Ensembl" id="ENSSSCT00040084934.1">
    <property type="protein sequence ID" value="ENSSSCP00040037090.1"/>
    <property type="gene ID" value="ENSSSCG00040062324.1"/>
</dbReference>
<dbReference type="Ensembl" id="ENSSSCT00045032387.1">
    <property type="protein sequence ID" value="ENSSSCP00045022432.1"/>
    <property type="gene ID" value="ENSSSCG00045019037.1"/>
</dbReference>
<dbReference type="Ensembl" id="ENSSSCT00050045631.1">
    <property type="protein sequence ID" value="ENSSSCP00050018754.1"/>
    <property type="gene ID" value="ENSSSCG00050034036.1"/>
</dbReference>
<dbReference type="Ensembl" id="ENSSSCT00055037921.1">
    <property type="protein sequence ID" value="ENSSSCP00055030139.1"/>
    <property type="gene ID" value="ENSSSCG00055019386.1"/>
</dbReference>
<dbReference type="Ensembl" id="ENSSSCT00060022904.1">
    <property type="protein sequence ID" value="ENSSSCP00060009527.1"/>
    <property type="gene ID" value="ENSSSCG00060017140.1"/>
</dbReference>
<dbReference type="Ensembl" id="ENSSSCT00065016100.1">
    <property type="protein sequence ID" value="ENSSSCP00065006564.1"/>
    <property type="gene ID" value="ENSSSCG00065012105.1"/>
</dbReference>
<dbReference type="Ensembl" id="ENSSSCT00070016268.1">
    <property type="protein sequence ID" value="ENSSSCP00070013470.1"/>
    <property type="gene ID" value="ENSSSCG00070008429.1"/>
</dbReference>
<dbReference type="Ensembl" id="ENSSSCT00105052855">
    <property type="protein sequence ID" value="ENSSSCP00105037203"/>
    <property type="gene ID" value="ENSSSCG00105027793"/>
</dbReference>
<dbReference type="Ensembl" id="ENSSSCT00110041393">
    <property type="protein sequence ID" value="ENSSSCP00110028979"/>
    <property type="gene ID" value="ENSSSCG00110021403"/>
</dbReference>
<dbReference type="Ensembl" id="ENSSSCT00115013663">
    <property type="protein sequence ID" value="ENSSSCP00115012909"/>
    <property type="gene ID" value="ENSSSCG00115007821"/>
</dbReference>
<dbReference type="Ensembl" id="ENSSSCT00130030354">
    <property type="protein sequence ID" value="ENSSSCP00130021063"/>
    <property type="gene ID" value="ENSSSCG00130013344"/>
</dbReference>
<dbReference type="GeneID" id="110256286"/>
<dbReference type="GeneTree" id="ENSGT00940000160159"/>
<dbReference type="InParanoid" id="P02475"/>
<dbReference type="OMA" id="QQDDHGY"/>
<dbReference type="OrthoDB" id="1431247at2759"/>
<dbReference type="Proteomes" id="UP000008227">
    <property type="component" value="Chromosome 13"/>
</dbReference>
<dbReference type="Proteomes" id="UP000314985">
    <property type="component" value="Chromosome 13"/>
</dbReference>
<dbReference type="Proteomes" id="UP000694570">
    <property type="component" value="Unplaced"/>
</dbReference>
<dbReference type="Proteomes" id="UP000694571">
    <property type="component" value="Unplaced"/>
</dbReference>
<dbReference type="Proteomes" id="UP000694720">
    <property type="component" value="Unplaced"/>
</dbReference>
<dbReference type="Proteomes" id="UP000694722">
    <property type="component" value="Unplaced"/>
</dbReference>
<dbReference type="Proteomes" id="UP000694723">
    <property type="component" value="Unplaced"/>
</dbReference>
<dbReference type="Proteomes" id="UP000694724">
    <property type="component" value="Unplaced"/>
</dbReference>
<dbReference type="Proteomes" id="UP000694725">
    <property type="component" value="Unplaced"/>
</dbReference>
<dbReference type="Proteomes" id="UP000694726">
    <property type="component" value="Unplaced"/>
</dbReference>
<dbReference type="Proteomes" id="UP000694727">
    <property type="component" value="Unplaced"/>
</dbReference>
<dbReference type="Proteomes" id="UP000694728">
    <property type="component" value="Unplaced"/>
</dbReference>
<dbReference type="Bgee" id="ENSSSCG00000038816">
    <property type="expression patterns" value="Expressed in psoas major muscle and 1 other cell type or tissue"/>
</dbReference>
<dbReference type="GO" id="GO:0005737">
    <property type="term" value="C:cytoplasm"/>
    <property type="evidence" value="ECO:0000250"/>
    <property type="project" value="UniProtKB"/>
</dbReference>
<dbReference type="GO" id="GO:0005829">
    <property type="term" value="C:cytosol"/>
    <property type="evidence" value="ECO:0007669"/>
    <property type="project" value="Ensembl"/>
</dbReference>
<dbReference type="GO" id="GO:0005654">
    <property type="term" value="C:nucleoplasm"/>
    <property type="evidence" value="ECO:0007669"/>
    <property type="project" value="Ensembl"/>
</dbReference>
<dbReference type="GO" id="GO:0005634">
    <property type="term" value="C:nucleus"/>
    <property type="evidence" value="ECO:0000250"/>
    <property type="project" value="UniProtKB"/>
</dbReference>
<dbReference type="GO" id="GO:0032991">
    <property type="term" value="C:protein-containing complex"/>
    <property type="evidence" value="ECO:0007669"/>
    <property type="project" value="Ensembl"/>
</dbReference>
<dbReference type="GO" id="GO:0042802">
    <property type="term" value="F:identical protein binding"/>
    <property type="evidence" value="ECO:0007669"/>
    <property type="project" value="Ensembl"/>
</dbReference>
<dbReference type="GO" id="GO:0046872">
    <property type="term" value="F:metal ion binding"/>
    <property type="evidence" value="ECO:0007669"/>
    <property type="project" value="UniProtKB-KW"/>
</dbReference>
<dbReference type="GO" id="GO:0005212">
    <property type="term" value="F:structural constituent of eye lens"/>
    <property type="evidence" value="ECO:0007669"/>
    <property type="project" value="UniProtKB-KW"/>
</dbReference>
<dbReference type="GO" id="GO:0051082">
    <property type="term" value="F:unfolded protein binding"/>
    <property type="evidence" value="ECO:0000318"/>
    <property type="project" value="GO_Central"/>
</dbReference>
<dbReference type="GO" id="GO:0007015">
    <property type="term" value="P:actin filament organization"/>
    <property type="evidence" value="ECO:0007669"/>
    <property type="project" value="Ensembl"/>
</dbReference>
<dbReference type="GO" id="GO:0060561">
    <property type="term" value="P:apoptotic process involved in morphogenesis"/>
    <property type="evidence" value="ECO:0007669"/>
    <property type="project" value="Ensembl"/>
</dbReference>
<dbReference type="GO" id="GO:0048596">
    <property type="term" value="P:embryonic camera-type eye morphogenesis"/>
    <property type="evidence" value="ECO:0007669"/>
    <property type="project" value="Ensembl"/>
</dbReference>
<dbReference type="GO" id="GO:0002088">
    <property type="term" value="P:lens development in camera-type eye"/>
    <property type="evidence" value="ECO:0000318"/>
    <property type="project" value="GO_Central"/>
</dbReference>
<dbReference type="GO" id="GO:0070309">
    <property type="term" value="P:lens fiber cell morphogenesis"/>
    <property type="evidence" value="ECO:0007669"/>
    <property type="project" value="Ensembl"/>
</dbReference>
<dbReference type="GO" id="GO:0007017">
    <property type="term" value="P:microtubule-based process"/>
    <property type="evidence" value="ECO:0007669"/>
    <property type="project" value="Ensembl"/>
</dbReference>
<dbReference type="GO" id="GO:0007005">
    <property type="term" value="P:mitochondrion organization"/>
    <property type="evidence" value="ECO:0007669"/>
    <property type="project" value="Ensembl"/>
</dbReference>
<dbReference type="GO" id="GO:0043066">
    <property type="term" value="P:negative regulation of apoptotic process"/>
    <property type="evidence" value="ECO:0000318"/>
    <property type="project" value="GO_Central"/>
</dbReference>
<dbReference type="GO" id="GO:0010629">
    <property type="term" value="P:negative regulation of gene expression"/>
    <property type="evidence" value="ECO:0007669"/>
    <property type="project" value="Ensembl"/>
</dbReference>
<dbReference type="GO" id="GO:0032387">
    <property type="term" value="P:negative regulation of intracellular transport"/>
    <property type="evidence" value="ECO:0007669"/>
    <property type="project" value="Ensembl"/>
</dbReference>
<dbReference type="GO" id="GO:0030307">
    <property type="term" value="P:positive regulation of cell growth"/>
    <property type="evidence" value="ECO:0007669"/>
    <property type="project" value="Ensembl"/>
</dbReference>
<dbReference type="GO" id="GO:0042026">
    <property type="term" value="P:protein refolding"/>
    <property type="evidence" value="ECO:0000318"/>
    <property type="project" value="GO_Central"/>
</dbReference>
<dbReference type="GO" id="GO:0050821">
    <property type="term" value="P:protein stabilization"/>
    <property type="evidence" value="ECO:0007669"/>
    <property type="project" value="Ensembl"/>
</dbReference>
<dbReference type="GO" id="GO:0009408">
    <property type="term" value="P:response to heat"/>
    <property type="evidence" value="ECO:0000318"/>
    <property type="project" value="GO_Central"/>
</dbReference>
<dbReference type="GO" id="GO:0042542">
    <property type="term" value="P:response to hydrogen peroxide"/>
    <property type="evidence" value="ECO:0007669"/>
    <property type="project" value="Ensembl"/>
</dbReference>
<dbReference type="GO" id="GO:0001666">
    <property type="term" value="P:response to hypoxia"/>
    <property type="evidence" value="ECO:0007669"/>
    <property type="project" value="Ensembl"/>
</dbReference>
<dbReference type="GO" id="GO:0070141">
    <property type="term" value="P:response to UV-A"/>
    <property type="evidence" value="ECO:0007669"/>
    <property type="project" value="Ensembl"/>
</dbReference>
<dbReference type="GO" id="GO:0007021">
    <property type="term" value="P:tubulin complex assembly"/>
    <property type="evidence" value="ECO:0007669"/>
    <property type="project" value="Ensembl"/>
</dbReference>
<dbReference type="GO" id="GO:0007601">
    <property type="term" value="P:visual perception"/>
    <property type="evidence" value="ECO:0007669"/>
    <property type="project" value="Ensembl"/>
</dbReference>
<dbReference type="FunFam" id="2.60.40.790:FF:000008">
    <property type="entry name" value="Alpha-crystallin A chain"/>
    <property type="match status" value="1"/>
</dbReference>
<dbReference type="Gene3D" id="2.60.40.790">
    <property type="match status" value="1"/>
</dbReference>
<dbReference type="InterPro" id="IPR002068">
    <property type="entry name" value="A-crystallin/Hsp20_dom"/>
</dbReference>
<dbReference type="InterPro" id="IPR055269">
    <property type="entry name" value="Alpha-crystallin/HSP_16"/>
</dbReference>
<dbReference type="InterPro" id="IPR001436">
    <property type="entry name" value="Alpha-crystallin/sHSP_animal"/>
</dbReference>
<dbReference type="InterPro" id="IPR003090">
    <property type="entry name" value="Alpha-crystallin_N"/>
</dbReference>
<dbReference type="InterPro" id="IPR008978">
    <property type="entry name" value="HSP20-like_chaperone"/>
</dbReference>
<dbReference type="PANTHER" id="PTHR45640:SF14">
    <property type="entry name" value="ALPHA-CRYSTALLIN A CHAIN"/>
    <property type="match status" value="1"/>
</dbReference>
<dbReference type="PANTHER" id="PTHR45640">
    <property type="entry name" value="HEAT SHOCK PROTEIN HSP-12.2-RELATED"/>
    <property type="match status" value="1"/>
</dbReference>
<dbReference type="Pfam" id="PF00525">
    <property type="entry name" value="Crystallin"/>
    <property type="match status" value="1"/>
</dbReference>
<dbReference type="Pfam" id="PF00011">
    <property type="entry name" value="HSP20"/>
    <property type="match status" value="1"/>
</dbReference>
<dbReference type="PIRSF" id="PIRSF036514">
    <property type="entry name" value="Sm_HSP_B1"/>
    <property type="match status" value="1"/>
</dbReference>
<dbReference type="PRINTS" id="PR00299">
    <property type="entry name" value="ACRYSTALLIN"/>
</dbReference>
<dbReference type="SUPFAM" id="SSF49764">
    <property type="entry name" value="HSP20-like chaperones"/>
    <property type="match status" value="1"/>
</dbReference>
<dbReference type="PROSITE" id="PS01031">
    <property type="entry name" value="SHSP"/>
    <property type="match status" value="1"/>
</dbReference>
<protein>
    <recommendedName>
        <fullName>Alpha-crystallin A chain</fullName>
    </recommendedName>
</protein>
<gene>
    <name type="primary">CRYAA</name>
</gene>
<name>CRYAA_PIG</name>
<proteinExistence type="evidence at protein level"/>
<keyword id="KW-0007">Acetylation</keyword>
<keyword id="KW-0143">Chaperone</keyword>
<keyword id="KW-0963">Cytoplasm</keyword>
<keyword id="KW-0903">Direct protein sequencing</keyword>
<keyword id="KW-0273">Eye lens protein</keyword>
<keyword id="KW-0325">Glycoprotein</keyword>
<keyword id="KW-0479">Metal-binding</keyword>
<keyword id="KW-0488">Methylation</keyword>
<keyword id="KW-0539">Nucleus</keyword>
<keyword id="KW-0597">Phosphoprotein</keyword>
<keyword id="KW-1185">Reference proteome</keyword>
<keyword id="KW-0862">Zinc</keyword>
<accession>P02475</accession>
<feature type="chain" id="PRO_0000125879" description="Alpha-crystallin A chain">
    <location>
        <begin position="1"/>
        <end position="173"/>
    </location>
</feature>
<feature type="domain" description="sHSP" evidence="5">
    <location>
        <begin position="52"/>
        <end position="162"/>
    </location>
</feature>
<feature type="region of interest" description="Required for complex formation with BFSP1 and BFSP2" evidence="4">
    <location>
        <begin position="1"/>
        <end position="63"/>
    </location>
</feature>
<feature type="region of interest" description="Disordered" evidence="6">
    <location>
        <begin position="144"/>
        <end position="173"/>
    </location>
</feature>
<feature type="compositionally biased region" description="Basic and acidic residues" evidence="6">
    <location>
        <begin position="153"/>
        <end position="167"/>
    </location>
</feature>
<feature type="binding site" evidence="1">
    <location>
        <position position="79"/>
    </location>
    <ligand>
        <name>Zn(2+)</name>
        <dbReference type="ChEBI" id="CHEBI:29105"/>
        <label>1</label>
    </ligand>
</feature>
<feature type="binding site" evidence="2">
    <location>
        <position position="100"/>
    </location>
    <ligand>
        <name>Zn(2+)</name>
        <dbReference type="ChEBI" id="CHEBI:29105"/>
        <label>1</label>
    </ligand>
</feature>
<feature type="binding site" evidence="2">
    <location>
        <position position="102"/>
    </location>
    <ligand>
        <name>Zn(2+)</name>
        <dbReference type="ChEBI" id="CHEBI:29105"/>
        <label>1</label>
    </ligand>
</feature>
<feature type="binding site" evidence="2">
    <location>
        <position position="107"/>
    </location>
    <ligand>
        <name>Zn(2+)</name>
        <dbReference type="ChEBI" id="CHEBI:29105"/>
        <label>2</label>
    </ligand>
</feature>
<feature type="binding site" evidence="2">
    <location>
        <position position="154"/>
    </location>
    <ligand>
        <name>Zn(2+)</name>
        <dbReference type="ChEBI" id="CHEBI:29105"/>
        <label>3</label>
    </ligand>
</feature>
<feature type="modified residue" description="N-acetylmethionine" evidence="3 7">
    <location>
        <position position="1"/>
    </location>
</feature>
<feature type="modified residue" description="Deamidated glutamine; partial" evidence="1">
    <location>
        <position position="6"/>
    </location>
</feature>
<feature type="modified residue" description="Phosphoserine" evidence="4">
    <location>
        <position position="45"/>
    </location>
</feature>
<feature type="modified residue" description="Deamidated glutamine; partial" evidence="1">
    <location>
        <position position="50"/>
    </location>
</feature>
<feature type="modified residue" description="N6-acetyllysine" evidence="4">
    <location>
        <position position="70"/>
    </location>
</feature>
<feature type="modified residue" description="Deamidated glutamine; partial" evidence="1">
    <location>
        <position position="90"/>
    </location>
</feature>
<feature type="modified residue" description="N6-acetyllysine" evidence="4">
    <location>
        <position position="99"/>
    </location>
</feature>
<feature type="modified residue" description="Deamidated asparagine; partial" evidence="1">
    <location>
        <position position="101"/>
    </location>
</feature>
<feature type="modified residue" description="Phosphoserine" evidence="2">
    <location>
        <position position="122"/>
    </location>
</feature>
<feature type="modified residue" description="Deamidated asparagine; partial" evidence="1">
    <location>
        <position position="123"/>
    </location>
</feature>
<feature type="glycosylation site" description="O-linked (GlcNAc) serine" evidence="1">
    <location>
        <position position="162"/>
    </location>
</feature>